<protein>
    <recommendedName>
        <fullName evidence="1">Large ribosomal subunit protein bL35</fullName>
    </recommendedName>
    <alternativeName>
        <fullName evidence="3">50S ribosomal protein L35</fullName>
    </alternativeName>
</protein>
<gene>
    <name evidence="1" type="primary">rpmI</name>
    <name type="ordered locus">SGR_5906</name>
</gene>
<organism>
    <name type="scientific">Streptomyces griseus subsp. griseus (strain JCM 4626 / CBS 651.72 / NBRC 13350 / KCC S-0626 / ISP 5235)</name>
    <dbReference type="NCBI Taxonomy" id="455632"/>
    <lineage>
        <taxon>Bacteria</taxon>
        <taxon>Bacillati</taxon>
        <taxon>Actinomycetota</taxon>
        <taxon>Actinomycetes</taxon>
        <taxon>Kitasatosporales</taxon>
        <taxon>Streptomycetaceae</taxon>
        <taxon>Streptomyces</taxon>
    </lineage>
</organism>
<dbReference type="EMBL" id="AP009493">
    <property type="protein sequence ID" value="BAG22735.1"/>
    <property type="molecule type" value="Genomic_DNA"/>
</dbReference>
<dbReference type="RefSeq" id="WP_003970213.1">
    <property type="nucleotide sequence ID" value="NC_010572.1"/>
</dbReference>
<dbReference type="SMR" id="B1W353"/>
<dbReference type="GeneID" id="95484983"/>
<dbReference type="KEGG" id="sgr:SGR_5906"/>
<dbReference type="eggNOG" id="COG0291">
    <property type="taxonomic scope" value="Bacteria"/>
</dbReference>
<dbReference type="HOGENOM" id="CLU_169643_4_2_11"/>
<dbReference type="Proteomes" id="UP000001685">
    <property type="component" value="Chromosome"/>
</dbReference>
<dbReference type="GO" id="GO:0022625">
    <property type="term" value="C:cytosolic large ribosomal subunit"/>
    <property type="evidence" value="ECO:0007669"/>
    <property type="project" value="TreeGrafter"/>
</dbReference>
<dbReference type="GO" id="GO:0003735">
    <property type="term" value="F:structural constituent of ribosome"/>
    <property type="evidence" value="ECO:0007669"/>
    <property type="project" value="InterPro"/>
</dbReference>
<dbReference type="GO" id="GO:0006412">
    <property type="term" value="P:translation"/>
    <property type="evidence" value="ECO:0007669"/>
    <property type="project" value="UniProtKB-UniRule"/>
</dbReference>
<dbReference type="FunFam" id="4.10.410.60:FF:000001">
    <property type="entry name" value="50S ribosomal protein L35"/>
    <property type="match status" value="1"/>
</dbReference>
<dbReference type="Gene3D" id="4.10.410.60">
    <property type="match status" value="1"/>
</dbReference>
<dbReference type="HAMAP" id="MF_00514">
    <property type="entry name" value="Ribosomal_bL35"/>
    <property type="match status" value="1"/>
</dbReference>
<dbReference type="InterPro" id="IPR001706">
    <property type="entry name" value="Ribosomal_bL35"/>
</dbReference>
<dbReference type="InterPro" id="IPR021137">
    <property type="entry name" value="Ribosomal_bL35-like"/>
</dbReference>
<dbReference type="InterPro" id="IPR018265">
    <property type="entry name" value="Ribosomal_bL35_CS"/>
</dbReference>
<dbReference type="InterPro" id="IPR037229">
    <property type="entry name" value="Ribosomal_bL35_sf"/>
</dbReference>
<dbReference type="NCBIfam" id="TIGR00001">
    <property type="entry name" value="rpmI_bact"/>
    <property type="match status" value="1"/>
</dbReference>
<dbReference type="PANTHER" id="PTHR33343">
    <property type="entry name" value="54S RIBOSOMAL PROTEIN BL35M"/>
    <property type="match status" value="1"/>
</dbReference>
<dbReference type="PANTHER" id="PTHR33343:SF1">
    <property type="entry name" value="LARGE RIBOSOMAL SUBUNIT PROTEIN BL35M"/>
    <property type="match status" value="1"/>
</dbReference>
<dbReference type="Pfam" id="PF01632">
    <property type="entry name" value="Ribosomal_L35p"/>
    <property type="match status" value="1"/>
</dbReference>
<dbReference type="PRINTS" id="PR00064">
    <property type="entry name" value="RIBOSOMALL35"/>
</dbReference>
<dbReference type="SUPFAM" id="SSF143034">
    <property type="entry name" value="L35p-like"/>
    <property type="match status" value="1"/>
</dbReference>
<dbReference type="PROSITE" id="PS00936">
    <property type="entry name" value="RIBOSOMAL_L35"/>
    <property type="match status" value="1"/>
</dbReference>
<evidence type="ECO:0000255" key="1">
    <source>
        <dbReference type="HAMAP-Rule" id="MF_00514"/>
    </source>
</evidence>
<evidence type="ECO:0000256" key="2">
    <source>
        <dbReference type="SAM" id="MobiDB-lite"/>
    </source>
</evidence>
<evidence type="ECO:0000305" key="3"/>
<accession>B1W353</accession>
<comment type="similarity">
    <text evidence="1">Belongs to the bacterial ribosomal protein bL35 family.</text>
</comment>
<proteinExistence type="inferred from homology"/>
<name>RL35_STRGG</name>
<feature type="chain" id="PRO_1000127411" description="Large ribosomal subunit protein bL35">
    <location>
        <begin position="1"/>
        <end position="64"/>
    </location>
</feature>
<feature type="region of interest" description="Disordered" evidence="2">
    <location>
        <begin position="1"/>
        <end position="45"/>
    </location>
</feature>
<feature type="compositionally biased region" description="Basic residues" evidence="2">
    <location>
        <begin position="1"/>
        <end position="15"/>
    </location>
</feature>
<feature type="compositionally biased region" description="Basic residues" evidence="2">
    <location>
        <begin position="27"/>
        <end position="42"/>
    </location>
</feature>
<keyword id="KW-0687">Ribonucleoprotein</keyword>
<keyword id="KW-0689">Ribosomal protein</keyword>
<reference key="1">
    <citation type="journal article" date="2008" name="J. Bacteriol.">
        <title>Genome sequence of the streptomycin-producing microorganism Streptomyces griseus IFO 13350.</title>
        <authorList>
            <person name="Ohnishi Y."/>
            <person name="Ishikawa J."/>
            <person name="Hara H."/>
            <person name="Suzuki H."/>
            <person name="Ikenoya M."/>
            <person name="Ikeda H."/>
            <person name="Yamashita A."/>
            <person name="Hattori M."/>
            <person name="Horinouchi S."/>
        </authorList>
    </citation>
    <scope>NUCLEOTIDE SEQUENCE [LARGE SCALE GENOMIC DNA]</scope>
    <source>
        <strain>JCM 4626 / CBS 651.72 / NBRC 13350 / KCC S-0626 / ISP 5235</strain>
    </source>
</reference>
<sequence>MPKNKTHSGASKRFKITGSGKVLRERAGKRHLLEHKSSKKTRSLTGTVVVAPADAKKIKKLLGK</sequence>